<feature type="chain" id="PRO_0000297985" description="S-ribosylhomocysteine lyase">
    <location>
        <begin position="1"/>
        <end position="164"/>
    </location>
</feature>
<feature type="binding site" evidence="1">
    <location>
        <position position="61"/>
    </location>
    <ligand>
        <name>Fe cation</name>
        <dbReference type="ChEBI" id="CHEBI:24875"/>
    </ligand>
</feature>
<feature type="binding site" evidence="1">
    <location>
        <position position="65"/>
    </location>
    <ligand>
        <name>Fe cation</name>
        <dbReference type="ChEBI" id="CHEBI:24875"/>
    </ligand>
</feature>
<feature type="binding site" evidence="1">
    <location>
        <position position="131"/>
    </location>
    <ligand>
        <name>Fe cation</name>
        <dbReference type="ChEBI" id="CHEBI:24875"/>
    </ligand>
</feature>
<accession>Q8G568</accession>
<proteinExistence type="inferred from homology"/>
<comment type="function">
    <text evidence="1">Involved in the synthesis of autoinducer 2 (AI-2) which is secreted by bacteria and is used to communicate both the cell density and the metabolic potential of the environment. The regulation of gene expression in response to changes in cell density is called quorum sensing. Catalyzes the transformation of S-ribosylhomocysteine (RHC) to homocysteine (HC) and 4,5-dihydroxy-2,3-pentadione (DPD).</text>
</comment>
<comment type="catalytic activity">
    <reaction evidence="1">
        <text>S-(5-deoxy-D-ribos-5-yl)-L-homocysteine = (S)-4,5-dihydroxypentane-2,3-dione + L-homocysteine</text>
        <dbReference type="Rhea" id="RHEA:17753"/>
        <dbReference type="ChEBI" id="CHEBI:29484"/>
        <dbReference type="ChEBI" id="CHEBI:58195"/>
        <dbReference type="ChEBI" id="CHEBI:58199"/>
        <dbReference type="EC" id="4.4.1.21"/>
    </reaction>
</comment>
<comment type="cofactor">
    <cofactor evidence="1">
        <name>Fe cation</name>
        <dbReference type="ChEBI" id="CHEBI:24875"/>
    </cofactor>
    <text evidence="1">Binds 1 Fe cation per subunit.</text>
</comment>
<comment type="subunit">
    <text evidence="1">Homodimer.</text>
</comment>
<comment type="similarity">
    <text evidence="1">Belongs to the LuxS family.</text>
</comment>
<comment type="sequence caution" evidence="2">
    <conflict type="erroneous initiation">
        <sequence resource="EMBL-CDS" id="AAN24957"/>
    </conflict>
</comment>
<gene>
    <name evidence="1" type="primary">luxS</name>
    <name type="ordered locus">BL1152</name>
</gene>
<protein>
    <recommendedName>
        <fullName evidence="1">S-ribosylhomocysteine lyase</fullName>
        <ecNumber evidence="1">4.4.1.21</ecNumber>
    </recommendedName>
    <alternativeName>
        <fullName evidence="1">AI-2 synthesis protein</fullName>
    </alternativeName>
    <alternativeName>
        <fullName evidence="1">Autoinducer-2 production protein LuxS</fullName>
    </alternativeName>
</protein>
<evidence type="ECO:0000255" key="1">
    <source>
        <dbReference type="HAMAP-Rule" id="MF_00091"/>
    </source>
</evidence>
<evidence type="ECO:0000305" key="2"/>
<sequence length="164" mass="18451">MAEETAEKPVVESFQLDHTKVKAPYVRYIDTETGPHGDVISNYDLRLTQPNEQAIPTGGLHTIEHTIAVLLRERIPGYIDCSPFGCRTGFHLLTWGTHSTEDVAKALKESLEFIAYKATWDDVPATTEKSCGNYRDHSLFTAKEWAKLILEEGISSDPFERKVV</sequence>
<reference key="1">
    <citation type="journal article" date="2002" name="Proc. Natl. Acad. Sci. U.S.A.">
        <title>The genome sequence of Bifidobacterium longum reflects its adaptation to the human gastrointestinal tract.</title>
        <authorList>
            <person name="Schell M.A."/>
            <person name="Karmirantzou M."/>
            <person name="Snel B."/>
            <person name="Vilanova D."/>
            <person name="Berger B."/>
            <person name="Pessi G."/>
            <person name="Zwahlen M.-C."/>
            <person name="Desiere F."/>
            <person name="Bork P."/>
            <person name="Delley M."/>
            <person name="Pridmore R.D."/>
            <person name="Arigoni F."/>
        </authorList>
    </citation>
    <scope>NUCLEOTIDE SEQUENCE [LARGE SCALE GENOMIC DNA]</scope>
    <source>
        <strain>NCC 2705</strain>
    </source>
</reference>
<dbReference type="EC" id="4.4.1.21" evidence="1"/>
<dbReference type="EMBL" id="AE014295">
    <property type="protein sequence ID" value="AAN24957.1"/>
    <property type="status" value="ALT_INIT"/>
    <property type="molecule type" value="Genomic_DNA"/>
</dbReference>
<dbReference type="RefSeq" id="NP_696321.2">
    <property type="nucleotide sequence ID" value="NC_004307.2"/>
</dbReference>
<dbReference type="RefSeq" id="WP_011068320.1">
    <property type="nucleotide sequence ID" value="NC_004307.2"/>
</dbReference>
<dbReference type="SMR" id="Q8G568"/>
<dbReference type="STRING" id="206672.BL1152"/>
<dbReference type="EnsemblBacteria" id="AAN24957">
    <property type="protein sequence ID" value="AAN24957"/>
    <property type="gene ID" value="BL1152"/>
</dbReference>
<dbReference type="KEGG" id="blo:BL1152"/>
<dbReference type="PATRIC" id="fig|206672.9.peg.862"/>
<dbReference type="HOGENOM" id="CLU_107531_2_0_11"/>
<dbReference type="OrthoDB" id="9788129at2"/>
<dbReference type="PhylomeDB" id="Q8G568"/>
<dbReference type="BRENDA" id="4.4.1.21">
    <property type="organism ID" value="851"/>
</dbReference>
<dbReference type="Proteomes" id="UP000000439">
    <property type="component" value="Chromosome"/>
</dbReference>
<dbReference type="GO" id="GO:0005506">
    <property type="term" value="F:iron ion binding"/>
    <property type="evidence" value="ECO:0007669"/>
    <property type="project" value="InterPro"/>
</dbReference>
<dbReference type="GO" id="GO:0043768">
    <property type="term" value="F:S-ribosylhomocysteine lyase activity"/>
    <property type="evidence" value="ECO:0007669"/>
    <property type="project" value="UniProtKB-UniRule"/>
</dbReference>
<dbReference type="GO" id="GO:0009372">
    <property type="term" value="P:quorum sensing"/>
    <property type="evidence" value="ECO:0007669"/>
    <property type="project" value="UniProtKB-UniRule"/>
</dbReference>
<dbReference type="Gene3D" id="3.30.1360.80">
    <property type="entry name" value="S-ribosylhomocysteinase (LuxS)"/>
    <property type="match status" value="1"/>
</dbReference>
<dbReference type="HAMAP" id="MF_00091">
    <property type="entry name" value="LuxS"/>
    <property type="match status" value="1"/>
</dbReference>
<dbReference type="InterPro" id="IPR037005">
    <property type="entry name" value="LuxS_sf"/>
</dbReference>
<dbReference type="InterPro" id="IPR011249">
    <property type="entry name" value="Metalloenz_LuxS/M16"/>
</dbReference>
<dbReference type="InterPro" id="IPR003815">
    <property type="entry name" value="S-ribosylhomocysteinase"/>
</dbReference>
<dbReference type="NCBIfam" id="NF002605">
    <property type="entry name" value="PRK02260.2-3"/>
    <property type="match status" value="1"/>
</dbReference>
<dbReference type="NCBIfam" id="NF002608">
    <property type="entry name" value="PRK02260.3-1"/>
    <property type="match status" value="1"/>
</dbReference>
<dbReference type="PANTHER" id="PTHR35799">
    <property type="entry name" value="S-RIBOSYLHOMOCYSTEINE LYASE"/>
    <property type="match status" value="1"/>
</dbReference>
<dbReference type="PANTHER" id="PTHR35799:SF1">
    <property type="entry name" value="S-RIBOSYLHOMOCYSTEINE LYASE"/>
    <property type="match status" value="1"/>
</dbReference>
<dbReference type="Pfam" id="PF02664">
    <property type="entry name" value="LuxS"/>
    <property type="match status" value="1"/>
</dbReference>
<dbReference type="PIRSF" id="PIRSF006160">
    <property type="entry name" value="AI2"/>
    <property type="match status" value="1"/>
</dbReference>
<dbReference type="PRINTS" id="PR01487">
    <property type="entry name" value="LUXSPROTEIN"/>
</dbReference>
<dbReference type="SUPFAM" id="SSF63411">
    <property type="entry name" value="LuxS/MPP-like metallohydrolase"/>
    <property type="match status" value="1"/>
</dbReference>
<keyword id="KW-0071">Autoinducer synthesis</keyword>
<keyword id="KW-0408">Iron</keyword>
<keyword id="KW-0456">Lyase</keyword>
<keyword id="KW-0479">Metal-binding</keyword>
<keyword id="KW-0673">Quorum sensing</keyword>
<keyword id="KW-1185">Reference proteome</keyword>
<organism>
    <name type="scientific">Bifidobacterium longum (strain NCC 2705)</name>
    <dbReference type="NCBI Taxonomy" id="206672"/>
    <lineage>
        <taxon>Bacteria</taxon>
        <taxon>Bacillati</taxon>
        <taxon>Actinomycetota</taxon>
        <taxon>Actinomycetes</taxon>
        <taxon>Bifidobacteriales</taxon>
        <taxon>Bifidobacteriaceae</taxon>
        <taxon>Bifidobacterium</taxon>
    </lineage>
</organism>
<name>LUXS_BIFLO</name>